<accession>C0HL02</accession>
<reference evidence="4" key="1">
    <citation type="journal article" date="2017" name="Anal. Bioanal. Chem.">
        <title>Differentiation of frogs from two populations belonging to the Pelophylax esculentus complex by LC-MS/MS comparison of their skin peptidomes.</title>
        <authorList>
            <person name="Samgina T.Y."/>
            <person name="Artemenko K.A."/>
            <person name="Bergquist J."/>
            <person name="Trebse P."/>
            <person name="Torkar G."/>
            <person name="Tolpina M.D."/>
            <person name="Lebedev A.T."/>
        </authorList>
    </citation>
    <scope>PROTEIN SEQUENCE</scope>
    <scope>SUBCELLULAR LOCATION</scope>
    <scope>MASS SPECTROMETRY</scope>
    <scope>IDENTIFICATION BY MASS SPECTROMETRY</scope>
    <source>
        <tissue evidence="3">Skin secretion</tissue>
    </source>
</reference>
<protein>
    <recommendedName>
        <fullName evidence="3">Brevinin-2Rj</fullName>
    </recommendedName>
</protein>
<keyword id="KW-0929">Antimicrobial</keyword>
<keyword id="KW-0903">Direct protein sequencing</keyword>
<keyword id="KW-1015">Disulfide bond</keyword>
<keyword id="KW-0964">Secreted</keyword>
<evidence type="ECO:0000250" key="1">
    <source>
        <dbReference type="UniProtKB" id="P0C5X4"/>
    </source>
</evidence>
<evidence type="ECO:0000269" key="2">
    <source>
    </source>
</evidence>
<evidence type="ECO:0000303" key="3">
    <source>
    </source>
</evidence>
<evidence type="ECO:0000305" key="4"/>
<evidence type="ECO:0000305" key="5">
    <source>
    </source>
</evidence>
<feature type="peptide" id="PRO_0000442763" description="Brevinin-2Rj" evidence="2">
    <location>
        <begin position="1"/>
        <end position="30"/>
    </location>
</feature>
<feature type="disulfide bond" evidence="2">
    <location>
        <begin position="24"/>
        <end position="30"/>
    </location>
</feature>
<name>BR2J_PELRI</name>
<comment type="function">
    <text evidence="1">Antimicrobial peptide.</text>
</comment>
<comment type="subcellular location">
    <subcellularLocation>
        <location evidence="2">Secreted</location>
    </subcellularLocation>
</comment>
<comment type="tissue specificity">
    <text evidence="5">Expressed by the skin glands.</text>
</comment>
<comment type="mass spectrometry"/>
<comment type="similarity">
    <text evidence="4">Belongs to the frog skin active peptide (FSAP) family. Brevinin subfamily.</text>
</comment>
<dbReference type="SMR" id="C0HL02"/>
<dbReference type="GO" id="GO:0005576">
    <property type="term" value="C:extracellular region"/>
    <property type="evidence" value="ECO:0000314"/>
    <property type="project" value="UniProtKB"/>
</dbReference>
<dbReference type="GO" id="GO:0006952">
    <property type="term" value="P:defense response"/>
    <property type="evidence" value="ECO:0007669"/>
    <property type="project" value="InterPro"/>
</dbReference>
<dbReference type="InterPro" id="IPR012521">
    <property type="entry name" value="Antimicrobial_frog_2"/>
</dbReference>
<dbReference type="Pfam" id="PF08023">
    <property type="entry name" value="Antimicrobial_2"/>
    <property type="match status" value="1"/>
</dbReference>
<proteinExistence type="evidence at protein level"/>
<organism>
    <name type="scientific">Pelophylax ridibundus</name>
    <name type="common">Marsh frog</name>
    <name type="synonym">Rana ridibunda</name>
    <dbReference type="NCBI Taxonomy" id="8406"/>
    <lineage>
        <taxon>Eukaryota</taxon>
        <taxon>Metazoa</taxon>
        <taxon>Chordata</taxon>
        <taxon>Craniata</taxon>
        <taxon>Vertebrata</taxon>
        <taxon>Euteleostomi</taxon>
        <taxon>Amphibia</taxon>
        <taxon>Batrachia</taxon>
        <taxon>Anura</taxon>
        <taxon>Neobatrachia</taxon>
        <taxon>Ranoidea</taxon>
        <taxon>Ranidae</taxon>
        <taxon>Pelophylax</taxon>
    </lineage>
</organism>
<sequence>GIFLDKLKNFGKDVAGILLKKASCALSGQC</sequence>